<organism>
    <name type="scientific">Cyanothece sp. (strain PCC 7425 / ATCC 29141)</name>
    <dbReference type="NCBI Taxonomy" id="395961"/>
    <lineage>
        <taxon>Bacteria</taxon>
        <taxon>Bacillati</taxon>
        <taxon>Cyanobacteriota</taxon>
        <taxon>Cyanophyceae</taxon>
        <taxon>Gomontiellales</taxon>
        <taxon>Cyanothecaceae</taxon>
        <taxon>Cyanothece</taxon>
    </lineage>
</organism>
<accession>B8HMF0</accession>
<comment type="function">
    <text evidence="1">Specifically methylates guanosine-37 in various tRNAs.</text>
</comment>
<comment type="catalytic activity">
    <reaction evidence="1">
        <text>guanosine(37) in tRNA + S-adenosyl-L-methionine = N(1)-methylguanosine(37) in tRNA + S-adenosyl-L-homocysteine + H(+)</text>
        <dbReference type="Rhea" id="RHEA:36899"/>
        <dbReference type="Rhea" id="RHEA-COMP:10145"/>
        <dbReference type="Rhea" id="RHEA-COMP:10147"/>
        <dbReference type="ChEBI" id="CHEBI:15378"/>
        <dbReference type="ChEBI" id="CHEBI:57856"/>
        <dbReference type="ChEBI" id="CHEBI:59789"/>
        <dbReference type="ChEBI" id="CHEBI:73542"/>
        <dbReference type="ChEBI" id="CHEBI:74269"/>
        <dbReference type="EC" id="2.1.1.228"/>
    </reaction>
</comment>
<comment type="subunit">
    <text evidence="1">Homodimer.</text>
</comment>
<comment type="subcellular location">
    <subcellularLocation>
        <location evidence="1">Cytoplasm</location>
    </subcellularLocation>
</comment>
<comment type="similarity">
    <text evidence="1">Belongs to the RNA methyltransferase TrmD family.</text>
</comment>
<sequence>MRFDVVTLFPDFFTSPLASGLLGKALAKQIAEVYLLNPRDFTTDKHHRVDDESYGGGVGMVLKPEPIFAAVESLPVLPRREVILMSPQGERLDQALLQSLADNFDQLVVICGHYEGVDERVVDHLVTREISLGDFVLTCGEIPALTLLNGVIRLLPGTVGKAESLQNESFIDGLLDFPHYTRPADFRGWPVPQVLRSGHHAEVDRWRRTQQIQRTRDRRPDLYQRWLNSLPPDSLQDFTV</sequence>
<keyword id="KW-0963">Cytoplasm</keyword>
<keyword id="KW-0489">Methyltransferase</keyword>
<keyword id="KW-0949">S-adenosyl-L-methionine</keyword>
<keyword id="KW-0808">Transferase</keyword>
<keyword id="KW-0819">tRNA processing</keyword>
<feature type="chain" id="PRO_1000198568" description="tRNA (guanine-N(1)-)-methyltransferase">
    <location>
        <begin position="1"/>
        <end position="240"/>
    </location>
</feature>
<feature type="binding site" evidence="1">
    <location>
        <position position="112"/>
    </location>
    <ligand>
        <name>S-adenosyl-L-methionine</name>
        <dbReference type="ChEBI" id="CHEBI:59789"/>
    </ligand>
</feature>
<feature type="binding site" evidence="1">
    <location>
        <begin position="132"/>
        <end position="137"/>
    </location>
    <ligand>
        <name>S-adenosyl-L-methionine</name>
        <dbReference type="ChEBI" id="CHEBI:59789"/>
    </ligand>
</feature>
<proteinExistence type="inferred from homology"/>
<dbReference type="EC" id="2.1.1.228" evidence="1"/>
<dbReference type="EMBL" id="CP001344">
    <property type="protein sequence ID" value="ACL47157.1"/>
    <property type="molecule type" value="Genomic_DNA"/>
</dbReference>
<dbReference type="SMR" id="B8HMF0"/>
<dbReference type="STRING" id="395961.Cyan7425_4854"/>
<dbReference type="KEGG" id="cyn:Cyan7425_4854"/>
<dbReference type="eggNOG" id="COG0336">
    <property type="taxonomic scope" value="Bacteria"/>
</dbReference>
<dbReference type="HOGENOM" id="CLU_047363_0_1_3"/>
<dbReference type="OrthoDB" id="9807416at2"/>
<dbReference type="GO" id="GO:0005829">
    <property type="term" value="C:cytosol"/>
    <property type="evidence" value="ECO:0007669"/>
    <property type="project" value="TreeGrafter"/>
</dbReference>
<dbReference type="GO" id="GO:0052906">
    <property type="term" value="F:tRNA (guanine(37)-N1)-methyltransferase activity"/>
    <property type="evidence" value="ECO:0007669"/>
    <property type="project" value="UniProtKB-UniRule"/>
</dbReference>
<dbReference type="GO" id="GO:0002939">
    <property type="term" value="P:tRNA N1-guanine methylation"/>
    <property type="evidence" value="ECO:0007669"/>
    <property type="project" value="TreeGrafter"/>
</dbReference>
<dbReference type="CDD" id="cd18080">
    <property type="entry name" value="TrmD-like"/>
    <property type="match status" value="1"/>
</dbReference>
<dbReference type="FunFam" id="1.10.1270.20:FF:000001">
    <property type="entry name" value="tRNA (guanine-N(1)-)-methyltransferase"/>
    <property type="match status" value="1"/>
</dbReference>
<dbReference type="FunFam" id="3.40.1280.10:FF:000001">
    <property type="entry name" value="tRNA (guanine-N(1)-)-methyltransferase"/>
    <property type="match status" value="1"/>
</dbReference>
<dbReference type="Gene3D" id="3.40.1280.10">
    <property type="match status" value="1"/>
</dbReference>
<dbReference type="Gene3D" id="1.10.1270.20">
    <property type="entry name" value="tRNA(m1g37)methyltransferase, domain 2"/>
    <property type="match status" value="1"/>
</dbReference>
<dbReference type="HAMAP" id="MF_00605">
    <property type="entry name" value="TrmD"/>
    <property type="match status" value="1"/>
</dbReference>
<dbReference type="InterPro" id="IPR029028">
    <property type="entry name" value="Alpha/beta_knot_MTases"/>
</dbReference>
<dbReference type="InterPro" id="IPR023148">
    <property type="entry name" value="tRNA_m1G_MeTrfase_C_sf"/>
</dbReference>
<dbReference type="InterPro" id="IPR002649">
    <property type="entry name" value="tRNA_m1G_MeTrfase_TrmD"/>
</dbReference>
<dbReference type="InterPro" id="IPR029026">
    <property type="entry name" value="tRNA_m1G_MTases_N"/>
</dbReference>
<dbReference type="InterPro" id="IPR016009">
    <property type="entry name" value="tRNA_MeTrfase_TRMD/TRM10"/>
</dbReference>
<dbReference type="NCBIfam" id="NF000648">
    <property type="entry name" value="PRK00026.1"/>
    <property type="match status" value="1"/>
</dbReference>
<dbReference type="NCBIfam" id="TIGR00088">
    <property type="entry name" value="trmD"/>
    <property type="match status" value="1"/>
</dbReference>
<dbReference type="PANTHER" id="PTHR46417">
    <property type="entry name" value="TRNA (GUANINE-N(1)-)-METHYLTRANSFERASE"/>
    <property type="match status" value="1"/>
</dbReference>
<dbReference type="PANTHER" id="PTHR46417:SF1">
    <property type="entry name" value="TRNA (GUANINE-N(1)-)-METHYLTRANSFERASE"/>
    <property type="match status" value="1"/>
</dbReference>
<dbReference type="Pfam" id="PF01746">
    <property type="entry name" value="tRNA_m1G_MT"/>
    <property type="match status" value="1"/>
</dbReference>
<dbReference type="PIRSF" id="PIRSF000386">
    <property type="entry name" value="tRNA_mtase"/>
    <property type="match status" value="1"/>
</dbReference>
<dbReference type="SUPFAM" id="SSF75217">
    <property type="entry name" value="alpha/beta knot"/>
    <property type="match status" value="1"/>
</dbReference>
<gene>
    <name evidence="1" type="primary">trmD</name>
    <name type="ordered locus">Cyan7425_4854</name>
</gene>
<name>TRMD_CYAP4</name>
<evidence type="ECO:0000255" key="1">
    <source>
        <dbReference type="HAMAP-Rule" id="MF_00605"/>
    </source>
</evidence>
<reference key="1">
    <citation type="journal article" date="2011" name="MBio">
        <title>Novel metabolic attributes of the genus Cyanothece, comprising a group of unicellular nitrogen-fixing Cyanobacteria.</title>
        <authorList>
            <person name="Bandyopadhyay A."/>
            <person name="Elvitigala T."/>
            <person name="Welsh E."/>
            <person name="Stockel J."/>
            <person name="Liberton M."/>
            <person name="Min H."/>
            <person name="Sherman L.A."/>
            <person name="Pakrasi H.B."/>
        </authorList>
    </citation>
    <scope>NUCLEOTIDE SEQUENCE [LARGE SCALE GENOMIC DNA]</scope>
    <source>
        <strain>PCC 7425 / ATCC 29141</strain>
    </source>
</reference>
<protein>
    <recommendedName>
        <fullName evidence="1">tRNA (guanine-N(1)-)-methyltransferase</fullName>
        <ecNumber evidence="1">2.1.1.228</ecNumber>
    </recommendedName>
    <alternativeName>
        <fullName evidence="1">M1G-methyltransferase</fullName>
    </alternativeName>
    <alternativeName>
        <fullName evidence="1">tRNA [GM37] methyltransferase</fullName>
    </alternativeName>
</protein>